<dbReference type="EMBL" id="AF059182">
    <property type="protein sequence ID" value="AAC41382.1"/>
    <property type="molecule type" value="mRNA"/>
</dbReference>
<dbReference type="RefSeq" id="NP_001083750.2">
    <property type="nucleotide sequence ID" value="NM_001090281.2"/>
</dbReference>
<dbReference type="SMR" id="O73819"/>
<dbReference type="DNASU" id="399096"/>
<dbReference type="GeneID" id="399096"/>
<dbReference type="KEGG" id="xla:399096"/>
<dbReference type="AGR" id="Xenbase:XB-GENE-6254627"/>
<dbReference type="CTD" id="399096"/>
<dbReference type="Xenbase" id="XB-GENE-6254627">
    <property type="gene designation" value="gna14.L"/>
</dbReference>
<dbReference type="OMA" id="LRIHYVC"/>
<dbReference type="OrthoDB" id="5817230at2759"/>
<dbReference type="Proteomes" id="UP000186698">
    <property type="component" value="Chromosome 1L"/>
</dbReference>
<dbReference type="Bgee" id="399096">
    <property type="expression patterns" value="Expressed in egg cell and 19 other cell types or tissues"/>
</dbReference>
<dbReference type="GO" id="GO:0005737">
    <property type="term" value="C:cytoplasm"/>
    <property type="evidence" value="ECO:0000318"/>
    <property type="project" value="GO_Central"/>
</dbReference>
<dbReference type="GO" id="GO:0005834">
    <property type="term" value="C:heterotrimeric G-protein complex"/>
    <property type="evidence" value="ECO:0000318"/>
    <property type="project" value="GO_Central"/>
</dbReference>
<dbReference type="GO" id="GO:0001664">
    <property type="term" value="F:G protein-coupled receptor binding"/>
    <property type="evidence" value="ECO:0000318"/>
    <property type="project" value="GO_Central"/>
</dbReference>
<dbReference type="GO" id="GO:0031683">
    <property type="term" value="F:G-protein beta/gamma-subunit complex binding"/>
    <property type="evidence" value="ECO:0000318"/>
    <property type="project" value="GO_Central"/>
</dbReference>
<dbReference type="GO" id="GO:0005525">
    <property type="term" value="F:GTP binding"/>
    <property type="evidence" value="ECO:0007669"/>
    <property type="project" value="UniProtKB-KW"/>
</dbReference>
<dbReference type="GO" id="GO:0003924">
    <property type="term" value="F:GTPase activity"/>
    <property type="evidence" value="ECO:0000318"/>
    <property type="project" value="GO_Central"/>
</dbReference>
<dbReference type="GO" id="GO:0046872">
    <property type="term" value="F:metal ion binding"/>
    <property type="evidence" value="ECO:0007669"/>
    <property type="project" value="UniProtKB-KW"/>
</dbReference>
<dbReference type="GO" id="GO:0001508">
    <property type="term" value="P:action potential"/>
    <property type="evidence" value="ECO:0000318"/>
    <property type="project" value="GO_Central"/>
</dbReference>
<dbReference type="GO" id="GO:0007188">
    <property type="term" value="P:adenylate cyclase-modulating G protein-coupled receptor signaling pathway"/>
    <property type="evidence" value="ECO:0000318"/>
    <property type="project" value="GO_Central"/>
</dbReference>
<dbReference type="GO" id="GO:0060158">
    <property type="term" value="P:phospholipase C-activating dopamine receptor signaling pathway"/>
    <property type="evidence" value="ECO:0000318"/>
    <property type="project" value="GO_Central"/>
</dbReference>
<dbReference type="CDD" id="cd00066">
    <property type="entry name" value="G-alpha"/>
    <property type="match status" value="1"/>
</dbReference>
<dbReference type="FunFam" id="3.40.50.300:FF:003977">
    <property type="entry name" value="Guanine nucleotide-binding protein G(q) subunit alpha"/>
    <property type="match status" value="1"/>
</dbReference>
<dbReference type="FunFam" id="1.10.400.10:FF:000002">
    <property type="entry name" value="guanine nucleotide-binding protein G(Q) subunit alpha"/>
    <property type="match status" value="1"/>
</dbReference>
<dbReference type="FunFam" id="3.40.50.300:FF:000692">
    <property type="entry name" value="Guanine nucleotide-binding protein subunit alpha"/>
    <property type="match status" value="1"/>
</dbReference>
<dbReference type="Gene3D" id="1.10.400.10">
    <property type="entry name" value="GI Alpha 1, domain 2-like"/>
    <property type="match status" value="1"/>
</dbReference>
<dbReference type="Gene3D" id="3.40.50.300">
    <property type="entry name" value="P-loop containing nucleotide triphosphate hydrolases"/>
    <property type="match status" value="1"/>
</dbReference>
<dbReference type="InterPro" id="IPR000654">
    <property type="entry name" value="Gprotein_alpha_Q"/>
</dbReference>
<dbReference type="InterPro" id="IPR001019">
    <property type="entry name" value="Gprotein_alpha_su"/>
</dbReference>
<dbReference type="InterPro" id="IPR011025">
    <property type="entry name" value="GproteinA_insert"/>
</dbReference>
<dbReference type="InterPro" id="IPR027417">
    <property type="entry name" value="P-loop_NTPase"/>
</dbReference>
<dbReference type="PANTHER" id="PTHR10218">
    <property type="entry name" value="GTP-BINDING PROTEIN ALPHA SUBUNIT"/>
    <property type="match status" value="1"/>
</dbReference>
<dbReference type="PANTHER" id="PTHR10218:SF213">
    <property type="entry name" value="GUANINE NUCLEOTIDE-BINDING PROTEIN SUBUNIT ALPHA-14"/>
    <property type="match status" value="1"/>
</dbReference>
<dbReference type="Pfam" id="PF00503">
    <property type="entry name" value="G-alpha"/>
    <property type="match status" value="1"/>
</dbReference>
<dbReference type="PRINTS" id="PR00318">
    <property type="entry name" value="GPROTEINA"/>
</dbReference>
<dbReference type="PRINTS" id="PR00442">
    <property type="entry name" value="GPROTEINAQ"/>
</dbReference>
<dbReference type="SMART" id="SM00275">
    <property type="entry name" value="G_alpha"/>
    <property type="match status" value="1"/>
</dbReference>
<dbReference type="SUPFAM" id="SSF52540">
    <property type="entry name" value="P-loop containing nucleoside triphosphate hydrolases"/>
    <property type="match status" value="1"/>
</dbReference>
<dbReference type="SUPFAM" id="SSF47895">
    <property type="entry name" value="Transducin (alpha subunit), insertion domain"/>
    <property type="match status" value="1"/>
</dbReference>
<dbReference type="PROSITE" id="PS51882">
    <property type="entry name" value="G_ALPHA"/>
    <property type="match status" value="1"/>
</dbReference>
<sequence length="354" mass="41595">MAGCCLSAEEKESQRINAEIEKQLRRDKRDARRELKLLLLGTGESGKSTFIKQMRIIHGSGYTDEDRKGFTKLVYQNIFTSMQSMIRAMDTLRIQYTSEQNMENALVIREVEVDKVSSLERKHVEAIKKLWEDEGIQECYDRRREYQLSDSTKYYLSDIDRISNPGFIPTQQDVLRVRVPTTGIIEYPFDLENIIFRMVDVGGQRSERRKWIHCFENVTSIIFLVALSEYDQVLAECDNENRMEESKALFKTIITYPWFQNSSVILFLNKKDLLQEKIMYSHLIDYFPEFTGPKQDSQAARDFILKLYQDQNPDKEKVIYSHFTCATDTENIRFVFAAVKDTILQLNLREFNLV</sequence>
<name>GNA14_XENLA</name>
<organism>
    <name type="scientific">Xenopus laevis</name>
    <name type="common">African clawed frog</name>
    <dbReference type="NCBI Taxonomy" id="8355"/>
    <lineage>
        <taxon>Eukaryota</taxon>
        <taxon>Metazoa</taxon>
        <taxon>Chordata</taxon>
        <taxon>Craniata</taxon>
        <taxon>Vertebrata</taxon>
        <taxon>Euteleostomi</taxon>
        <taxon>Amphibia</taxon>
        <taxon>Batrachia</taxon>
        <taxon>Anura</taxon>
        <taxon>Pipoidea</taxon>
        <taxon>Pipidae</taxon>
        <taxon>Xenopodinae</taxon>
        <taxon>Xenopus</taxon>
        <taxon>Xenopus</taxon>
    </lineage>
</organism>
<reference key="1">
    <citation type="journal article" date="1998" name="J. Biol. Chem.">
        <title>Galpha14 and Galphaq mediate the response to trypsin in Xenopus oocytes.</title>
        <authorList>
            <person name="Shapira H."/>
            <person name="Amit I."/>
            <person name="Revach M."/>
            <person name="Oron Y."/>
            <person name="Battey J.F."/>
        </authorList>
    </citation>
    <scope>NUCLEOTIDE SEQUENCE [MRNA]</scope>
</reference>
<evidence type="ECO:0000250" key="1"/>
<evidence type="ECO:0000255" key="2">
    <source>
        <dbReference type="PROSITE-ProRule" id="PRU01230"/>
    </source>
</evidence>
<evidence type="ECO:0000305" key="3"/>
<accession>O73819</accession>
<proteinExistence type="evidence at transcript level"/>
<protein>
    <recommendedName>
        <fullName>Guanine nucleotide-binding protein subunit alpha-14</fullName>
        <shortName>G alpha-14</shortName>
        <shortName>G-protein subunit alpha-14</shortName>
    </recommendedName>
</protein>
<gene>
    <name type="primary">gna14</name>
</gene>
<keyword id="KW-0342">GTP-binding</keyword>
<keyword id="KW-0460">Magnesium</keyword>
<keyword id="KW-0479">Metal-binding</keyword>
<keyword id="KW-0547">Nucleotide-binding</keyword>
<keyword id="KW-1185">Reference proteome</keyword>
<keyword id="KW-0807">Transducer</keyword>
<comment type="function">
    <text>Guanine nucleotide-binding proteins (G proteins) are involved as modulators or transducers in various transmembrane signaling systems. Acts as an activator of phospholipase C. Mediates responses to trypsin.</text>
</comment>
<comment type="subunit">
    <text>G proteins are composed of 3 units; alpha, beta and gamma. The alpha chain contains the guanine nucleotide binding site.</text>
</comment>
<comment type="similarity">
    <text evidence="3">Belongs to the G-alpha family. G(q) subfamily.</text>
</comment>
<feature type="chain" id="PRO_0000203754" description="Guanine nucleotide-binding protein subunit alpha-14">
    <location>
        <begin position="1"/>
        <end position="354"/>
    </location>
</feature>
<feature type="domain" description="G-alpha" evidence="2">
    <location>
        <begin position="33"/>
        <end position="354"/>
    </location>
</feature>
<feature type="region of interest" description="G1 motif" evidence="2">
    <location>
        <begin position="36"/>
        <end position="49"/>
    </location>
</feature>
<feature type="region of interest" description="G2 motif" evidence="2">
    <location>
        <begin position="173"/>
        <end position="181"/>
    </location>
</feature>
<feature type="region of interest" description="G3 motif" evidence="2">
    <location>
        <begin position="196"/>
        <end position="205"/>
    </location>
</feature>
<feature type="region of interest" description="G4 motif" evidence="2">
    <location>
        <begin position="265"/>
        <end position="272"/>
    </location>
</feature>
<feature type="region of interest" description="G5 motif" evidence="2">
    <location>
        <begin position="324"/>
        <end position="329"/>
    </location>
</feature>
<feature type="binding site" evidence="1">
    <location>
        <begin position="41"/>
        <end position="48"/>
    </location>
    <ligand>
        <name>GTP</name>
        <dbReference type="ChEBI" id="CHEBI:37565"/>
    </ligand>
</feature>
<feature type="binding site" evidence="1">
    <location>
        <position position="48"/>
    </location>
    <ligand>
        <name>Mg(2+)</name>
        <dbReference type="ChEBI" id="CHEBI:18420"/>
    </ligand>
</feature>
<feature type="binding site" evidence="1">
    <location>
        <begin position="175"/>
        <end position="181"/>
    </location>
    <ligand>
        <name>GTP</name>
        <dbReference type="ChEBI" id="CHEBI:37565"/>
    </ligand>
</feature>
<feature type="binding site" evidence="1">
    <location>
        <position position="181"/>
    </location>
    <ligand>
        <name>Mg(2+)</name>
        <dbReference type="ChEBI" id="CHEBI:18420"/>
    </ligand>
</feature>
<feature type="binding site" evidence="1">
    <location>
        <begin position="200"/>
        <end position="204"/>
    </location>
    <ligand>
        <name>GTP</name>
        <dbReference type="ChEBI" id="CHEBI:37565"/>
    </ligand>
</feature>
<feature type="binding site" evidence="1">
    <location>
        <begin position="269"/>
        <end position="272"/>
    </location>
    <ligand>
        <name>GTP</name>
        <dbReference type="ChEBI" id="CHEBI:37565"/>
    </ligand>
</feature>
<feature type="binding site" evidence="1">
    <location>
        <position position="326"/>
    </location>
    <ligand>
        <name>GTP</name>
        <dbReference type="ChEBI" id="CHEBI:37565"/>
    </ligand>
</feature>